<organismHost>
    <name type="scientific">Connochaetes taurinus</name>
    <name type="common">Blue wildebeest</name>
    <dbReference type="NCBI Taxonomy" id="9927"/>
</organismHost>
<feature type="chain" id="PRO_0000405714" description="Thymidine kinase">
    <location>
        <begin position="1"/>
        <end position="561"/>
    </location>
</feature>
<feature type="region of interest" description="Disordered" evidence="2">
    <location>
        <begin position="1"/>
        <end position="22"/>
    </location>
</feature>
<feature type="region of interest" description="Disordered" evidence="2">
    <location>
        <begin position="34"/>
        <end position="122"/>
    </location>
</feature>
<feature type="compositionally biased region" description="Polar residues" evidence="2">
    <location>
        <begin position="1"/>
        <end position="14"/>
    </location>
</feature>
<feature type="compositionally biased region" description="Polar residues" evidence="2">
    <location>
        <begin position="112"/>
        <end position="122"/>
    </location>
</feature>
<feature type="active site" description="Proton acceptor" evidence="1">
    <location>
        <position position="272"/>
    </location>
</feature>
<feature type="binding site" evidence="1">
    <location>
        <begin position="245"/>
        <end position="252"/>
    </location>
    <ligand>
        <name>ATP</name>
        <dbReference type="ChEBI" id="CHEBI:30616"/>
    </ligand>
</feature>
<feature type="binding site" evidence="1">
    <location>
        <position position="310"/>
    </location>
    <ligand>
        <name>substrate</name>
    </ligand>
</feature>
<feature type="binding site" evidence="1">
    <location>
        <position position="400"/>
    </location>
    <ligand>
        <name>ATP</name>
        <dbReference type="ChEBI" id="CHEBI:30616"/>
    </ligand>
</feature>
<feature type="binding site" evidence="1">
    <location>
        <position position="406"/>
    </location>
    <ligand>
        <name>substrate</name>
    </ligand>
</feature>
<accession>O36371</accession>
<name>KITH_ALHV1</name>
<keyword id="KW-0067">ATP-binding</keyword>
<keyword id="KW-0237">DNA synthesis</keyword>
<keyword id="KW-0244">Early protein</keyword>
<keyword id="KW-0418">Kinase</keyword>
<keyword id="KW-0547">Nucleotide-binding</keyword>
<keyword id="KW-1185">Reference proteome</keyword>
<keyword id="KW-0808">Transferase</keyword>
<reference key="1">
    <citation type="journal article" date="1997" name="J. Virol.">
        <title>Primary structure of the alcelaphine herpesvirus 1 genome.</title>
        <authorList>
            <person name="Ensser A."/>
            <person name="Pflanz R."/>
            <person name="Fleckenstein B."/>
        </authorList>
    </citation>
    <scope>NUCLEOTIDE SEQUENCE [LARGE SCALE GENOMIC DNA]</scope>
</reference>
<sequence>MASNSHNNYNTPRRQNYDVPKAWEEDSLYENIDFLTQPAVSSDTSEDEEPLPLGRETGRGSRGSTRPKTPRGLVRPRQDADNPSSDEGFDWEPLESFTSQPGAFSFLEPPRLSSSNTASGLRSSCSDFTILGSSGENPTSHANLSEEEMYEEIPPLASNPSDERHPRQLSGAVAQGAIRKSPRKLKFKPAKFKGLSSSLLNPFTASDSGRRARRQTPTCQPGFTPIFQDLGEPHYVKACTVFFEGCMAAGKTTLLNFARQTLSDDEALTIPEPMRFWTEVYTNVLSQIVKINKECKPGKTSTTAELVSCQLKFATPLKTQSLFLQRSVKKDSEMQPVGPLDKWVIVDRHQLSALVVFPLVLMRRGMLSFSDFFNLLGMFEAHPGEVIALMSVNVEENFTRLKKRGRVCERHIDRDYIKEIKGSFNAAYCAWLFLQYFSIQTTMQICMGLSSLDEACATEGVCHTTASRIWNNSMLVTLSDIISQFSNDYTVQNVCYNFFSQLSTLKFVVIDLSAFRHDVPGAWGEFYMQVMKNGDIKTRVMDFTAIKALADTAHNTHASLD</sequence>
<evidence type="ECO:0000255" key="1">
    <source>
        <dbReference type="HAMAP-Rule" id="MF_04029"/>
    </source>
</evidence>
<evidence type="ECO:0000256" key="2">
    <source>
        <dbReference type="SAM" id="MobiDB-lite"/>
    </source>
</evidence>
<protein>
    <recommendedName>
        <fullName evidence="1">Thymidine kinase</fullName>
        <ecNumber evidence="1">2.7.1.21</ecNumber>
    </recommendedName>
</protein>
<organism>
    <name type="scientific">Alcelaphine herpesvirus 1 (strain C500)</name>
    <name type="common">AlHV-1</name>
    <name type="synonym">Malignant catarrhal fever virus</name>
    <dbReference type="NCBI Taxonomy" id="654901"/>
    <lineage>
        <taxon>Viruses</taxon>
        <taxon>Duplodnaviria</taxon>
        <taxon>Heunggongvirae</taxon>
        <taxon>Peploviricota</taxon>
        <taxon>Herviviricetes</taxon>
        <taxon>Herpesvirales</taxon>
        <taxon>Orthoherpesviridae</taxon>
        <taxon>Gammaherpesvirinae</taxon>
        <taxon>Macavirus</taxon>
        <taxon>Macavirus alcelaphinegamma1</taxon>
    </lineage>
</organism>
<gene>
    <name evidence="1" type="primary">TK</name>
    <name type="ordered locus">21</name>
</gene>
<proteinExistence type="inferred from homology"/>
<comment type="function">
    <text evidence="1">Catalyzes the transfer of the gamma-phospho group of ATP to thymidine to generate dTMP in the salvage pathway of pyrimidine synthesis. The dTMP serves as a substrate for DNA polymerase during viral DNA replication. Allows the virus to be reactivated and to grow in non-proliferative cells lacking a high concentration of phosphorylated nucleic acid precursors.</text>
</comment>
<comment type="catalytic activity">
    <reaction evidence="1">
        <text>thymidine + ATP = dTMP + ADP + H(+)</text>
        <dbReference type="Rhea" id="RHEA:19129"/>
        <dbReference type="ChEBI" id="CHEBI:15378"/>
        <dbReference type="ChEBI" id="CHEBI:17748"/>
        <dbReference type="ChEBI" id="CHEBI:30616"/>
        <dbReference type="ChEBI" id="CHEBI:63528"/>
        <dbReference type="ChEBI" id="CHEBI:456216"/>
        <dbReference type="EC" id="2.7.1.21"/>
    </reaction>
</comment>
<comment type="subunit">
    <text evidence="1">Homodimer.</text>
</comment>
<comment type="similarity">
    <text evidence="1">Belongs to the herpesviridae thymidine kinase family.</text>
</comment>
<dbReference type="EC" id="2.7.1.21" evidence="1"/>
<dbReference type="EMBL" id="AF005370">
    <property type="protein sequence ID" value="AAC58068.1"/>
    <property type="molecule type" value="Genomic_DNA"/>
</dbReference>
<dbReference type="PIR" id="T03116">
    <property type="entry name" value="A60030"/>
</dbReference>
<dbReference type="RefSeq" id="NP_065520.1">
    <property type="nucleotide sequence ID" value="NC_002531.1"/>
</dbReference>
<dbReference type="KEGG" id="vg:911756"/>
<dbReference type="Proteomes" id="UP000000941">
    <property type="component" value="Segment"/>
</dbReference>
<dbReference type="GO" id="GO:0005524">
    <property type="term" value="F:ATP binding"/>
    <property type="evidence" value="ECO:0007669"/>
    <property type="project" value="UniProtKB-KW"/>
</dbReference>
<dbReference type="GO" id="GO:0004797">
    <property type="term" value="F:thymidine kinase activity"/>
    <property type="evidence" value="ECO:0007669"/>
    <property type="project" value="UniProtKB-EC"/>
</dbReference>
<dbReference type="GO" id="GO:0071897">
    <property type="term" value="P:DNA biosynthetic process"/>
    <property type="evidence" value="ECO:0007669"/>
    <property type="project" value="UniProtKB-KW"/>
</dbReference>
<dbReference type="GO" id="GO:0006230">
    <property type="term" value="P:TMP biosynthetic process"/>
    <property type="evidence" value="ECO:0007669"/>
    <property type="project" value="InterPro"/>
</dbReference>
<dbReference type="Gene3D" id="3.40.50.300">
    <property type="entry name" value="P-loop containing nucleotide triphosphate hydrolases"/>
    <property type="match status" value="1"/>
</dbReference>
<dbReference type="HAMAP" id="MF_04029">
    <property type="entry name" value="HSV_KITH"/>
    <property type="match status" value="1"/>
</dbReference>
<dbReference type="InterPro" id="IPR001889">
    <property type="entry name" value="Herpes_TK"/>
</dbReference>
<dbReference type="InterPro" id="IPR013672">
    <property type="entry name" value="Herpes_TK_C"/>
</dbReference>
<dbReference type="InterPro" id="IPR027417">
    <property type="entry name" value="P-loop_NTPase"/>
</dbReference>
<dbReference type="Pfam" id="PF00693">
    <property type="entry name" value="Herpes_TK"/>
    <property type="match status" value="1"/>
</dbReference>
<dbReference type="Pfam" id="PF08465">
    <property type="entry name" value="Herpes_TK_C"/>
    <property type="match status" value="1"/>
</dbReference>
<dbReference type="SUPFAM" id="SSF52540">
    <property type="entry name" value="P-loop containing nucleoside triphosphate hydrolases"/>
    <property type="match status" value="1"/>
</dbReference>